<reference key="1">
    <citation type="submission" date="2005-09" db="EMBL/GenBank/DDBJ databases">
        <title>Annotation of the Aspergillus terreus NIH2624 genome.</title>
        <authorList>
            <person name="Birren B.W."/>
            <person name="Lander E.S."/>
            <person name="Galagan J.E."/>
            <person name="Nusbaum C."/>
            <person name="Devon K."/>
            <person name="Henn M."/>
            <person name="Ma L.-J."/>
            <person name="Jaffe D.B."/>
            <person name="Butler J."/>
            <person name="Alvarez P."/>
            <person name="Gnerre S."/>
            <person name="Grabherr M."/>
            <person name="Kleber M."/>
            <person name="Mauceli E.W."/>
            <person name="Brockman W."/>
            <person name="Rounsley S."/>
            <person name="Young S.K."/>
            <person name="LaButti K."/>
            <person name="Pushparaj V."/>
            <person name="DeCaprio D."/>
            <person name="Crawford M."/>
            <person name="Koehrsen M."/>
            <person name="Engels R."/>
            <person name="Montgomery P."/>
            <person name="Pearson M."/>
            <person name="Howarth C."/>
            <person name="Larson L."/>
            <person name="Luoma S."/>
            <person name="White J."/>
            <person name="Alvarado L."/>
            <person name="Kodira C.D."/>
            <person name="Zeng Q."/>
            <person name="Oleary S."/>
            <person name="Yandava C."/>
            <person name="Denning D.W."/>
            <person name="Nierman W.C."/>
            <person name="Milne T."/>
            <person name="Madden K."/>
        </authorList>
    </citation>
    <scope>NUCLEOTIDE SEQUENCE [LARGE SCALE GENOMIC DNA]</scope>
    <source>
        <strain>NIH 2624 / FGSC A1156</strain>
    </source>
</reference>
<reference key="2">
    <citation type="journal article" date="2013" name="J. Am. Chem. Soc.">
        <title>Biosynthetic pathway for the epipolythiodioxopiperazine acetylaranotin in Aspergillus terreus revealed by genome-based deletion analysis.</title>
        <authorList>
            <person name="Guo C.J."/>
            <person name="Yeh H.H."/>
            <person name="Chiang Y.M."/>
            <person name="Sanchez J.F."/>
            <person name="Chang S.L."/>
            <person name="Bruno K.S."/>
            <person name="Wang C.C."/>
        </authorList>
    </citation>
    <scope>FUNCTION</scope>
</reference>
<reference key="3">
    <citation type="journal article" date="2018" name="Fungal Genet. Biol.">
        <title>Genome-based deletion analysis in Aspergillus terreus reveals the acetylaranotin bis-thiomethyltransferase gene.</title>
        <authorList>
            <person name="Sun W.W."/>
            <person name="Romsdahl J."/>
            <person name="Guo C.J."/>
            <person name="Wang C.C.C."/>
        </authorList>
    </citation>
    <scope>IDENTIFICATION</scope>
    <scope>FUNCTION</scope>
    <scope>DISRUPTION PHENOTYPE</scope>
    <scope>INDUCTION</scope>
</reference>
<dbReference type="EC" id="2.1.1.-" evidence="2"/>
<dbReference type="EMBL" id="CH476595">
    <property type="protein sequence ID" value="EAU38222.1"/>
    <property type="molecule type" value="Genomic_DNA"/>
</dbReference>
<dbReference type="RefSeq" id="XP_001208830.1">
    <property type="nucleotide sequence ID" value="XM_001208830.1"/>
</dbReference>
<dbReference type="SMR" id="Q0CXW9"/>
<dbReference type="STRING" id="341663.Q0CXW9"/>
<dbReference type="EnsemblFungi" id="EAU38222">
    <property type="protein sequence ID" value="EAU38222"/>
    <property type="gene ID" value="ATEG_01465"/>
</dbReference>
<dbReference type="GeneID" id="4315831"/>
<dbReference type="VEuPathDB" id="FungiDB:ATEG_01465"/>
<dbReference type="eggNOG" id="ENOG502S4V1">
    <property type="taxonomic scope" value="Eukaryota"/>
</dbReference>
<dbReference type="HOGENOM" id="CLU_065416_0_0_1"/>
<dbReference type="OMA" id="EFKVICM"/>
<dbReference type="OrthoDB" id="2013972at2759"/>
<dbReference type="Proteomes" id="UP000007963">
    <property type="component" value="Unassembled WGS sequence"/>
</dbReference>
<dbReference type="GO" id="GO:0008168">
    <property type="term" value="F:methyltransferase activity"/>
    <property type="evidence" value="ECO:0007669"/>
    <property type="project" value="UniProtKB-KW"/>
</dbReference>
<dbReference type="GO" id="GO:0032259">
    <property type="term" value="P:methylation"/>
    <property type="evidence" value="ECO:0007669"/>
    <property type="project" value="UniProtKB-KW"/>
</dbReference>
<dbReference type="CDD" id="cd02440">
    <property type="entry name" value="AdoMet_MTases"/>
    <property type="match status" value="1"/>
</dbReference>
<dbReference type="Gene3D" id="3.40.50.150">
    <property type="entry name" value="Vaccinia Virus protein VP39"/>
    <property type="match status" value="1"/>
</dbReference>
<dbReference type="InterPro" id="IPR041698">
    <property type="entry name" value="Methyltransf_25"/>
</dbReference>
<dbReference type="InterPro" id="IPR029063">
    <property type="entry name" value="SAM-dependent_MTases_sf"/>
</dbReference>
<dbReference type="Pfam" id="PF13649">
    <property type="entry name" value="Methyltransf_25"/>
    <property type="match status" value="1"/>
</dbReference>
<dbReference type="SUPFAM" id="SSF53335">
    <property type="entry name" value="S-adenosyl-L-methionine-dependent methyltransferases"/>
    <property type="match status" value="1"/>
</dbReference>
<organism>
    <name type="scientific">Aspergillus terreus (strain NIH 2624 / FGSC A1156)</name>
    <dbReference type="NCBI Taxonomy" id="341663"/>
    <lineage>
        <taxon>Eukaryota</taxon>
        <taxon>Fungi</taxon>
        <taxon>Dikarya</taxon>
        <taxon>Ascomycota</taxon>
        <taxon>Pezizomycotina</taxon>
        <taxon>Eurotiomycetes</taxon>
        <taxon>Eurotiomycetidae</taxon>
        <taxon>Eurotiales</taxon>
        <taxon>Aspergillaceae</taxon>
        <taxon>Aspergillus</taxon>
        <taxon>Aspergillus subgen. Circumdati</taxon>
    </lineage>
</organism>
<protein>
    <recommendedName>
        <fullName evidence="3">Acetylaranotin bis-thiomethyltransferase</fullName>
        <ecNumber evidence="2">2.1.1.-</ecNumber>
    </recommendedName>
    <alternativeName>
        <fullName evidence="3">Acetylaranotin biosynthesis protein S</fullName>
    </alternativeName>
</protein>
<gene>
    <name evidence="3" type="primary">ataS</name>
    <name type="ORF">ATEG_01465</name>
</gene>
<comment type="function">
    <text evidence="1 2">Acetylaranotin bis-thiomethyltransferase involved in the biosynthesis of acetylaranotin derivatives, members of the epipolythiodioxopiperazine (ETP) class of toxins characterized by a disulfide-bridged cyclic dipeptide (PubMed:30096370). The first step of acetylaranotin biosynthesis is performed by the NRPS ataP which produces diketopiperazine cyclo-L-Phe-L-Phe via the condensation of 2 phenylalanines (L-Phe) (PubMed:23586797). The ataC domain of ataTC then catalyzes the formation of bishydroxylation of cyclo-L-Phe-L-Phe (PubMed:23586797). The glutathione S-transferase domain ataG in ataIMG further catalyzes the conjugation of two glutathiones to the bishydroxylated intermediate (PubMed:23586797). Next, the dipeptidase ataJ removes the Glu residues (PubMed:23586797). The following step is performed by the carbon sulfur lyase domain ataI of ataIMG which may convert the bis-cysteinyl adduct to yield an epidithiol intermediate (PubMed:23586797). The ataT domain from ataTC then catalyzes the oxidation of the free dithiols, followed by a cyclization step catalyzed by the cytochrome P450 ataF (PubMed:23586797). AtaF probably acts as an epoxidase to promote a dual epoxidation formation at C8 and C9 along with C8' and C9', followed by the spontaneous nucleophilic attack of the amide nitrogens N10 and N10' to yield an intermediate with the pyrrolidine partial structure (PubMed:23586797). The final steps of acetylaranotin biosynthesis involve the acetylation and ring rearrangement of an epitetrathiodiketopiperazine intermediate to produce acetylaranotin (PubMed:23586797). AtaH probably catalyzes the acetylation of epitetrathiodiketopiperazine to produce a diacetate and ataY is responsible for the formation of the dihydrooxepin moiety that converts the diacetate intermediate to acetylaranotin via acetylapoaranotin (PubMed:23586797). Both enzymes could function independently in the absence of the other (PubMed:23586797). The acetylaranotin bis-thiomethyltransferase ataS located outside of acetylaranotin gene cluster is the main thiomethyltransferase responsible for converting acetylaranotin and its related intermediates to their methylated forms (PubMed:30096370).</text>
</comment>
<comment type="pathway">
    <text evidence="2">Mycotoxin biosynthesis.</text>
</comment>
<comment type="induction">
    <text evidence="2">Expression is co-regulated with the acetylaranotin gene cluster.</text>
</comment>
<comment type="disruption phenotype">
    <text evidence="2">Diminishes greatly the production of the two bis-thiomethylated analogs of acetylaranotin, bisdethiobis(methylthio)-acetylaranotin and bisdethiobis(methylthio)-acetylapoaranotin.</text>
</comment>
<comment type="miscellaneous">
    <text evidence="3">AtaS is located outside of the acetylaranotin gene cluster.</text>
</comment>
<comment type="similarity">
    <text evidence="4">Belongs to the class I-like SAM-binding methyltransferase superfamily.</text>
</comment>
<name>ATAS_ASPTN</name>
<proteinExistence type="evidence at transcript level"/>
<sequence length="274" mass="30491">MAKQELMNLFLSKEFASGYKLAELVTGPFAQLLVDYSGVVQSTQRPLVILDNACGTGIISEALNRSLDSQTKGHWELTCGDISDSLVQYVNQRIQDEGWPRAKAQLVDAQDTKLPSSHFTHIFAAFECLRILQPGGTVAISNWQLPEWLVIAKSAVEAMPGDLPFPTVKEFLASLNEGWDSEEPTRVKLEQEGFDMVQVATVSQKLSLPKSTLVELIKPMLPVILGRFWTDEQRAKHEKHIPTALQQYLDDKYGASDDVPVEPRVIIATARKPC</sequence>
<evidence type="ECO:0000269" key="1">
    <source>
    </source>
</evidence>
<evidence type="ECO:0000269" key="2">
    <source>
    </source>
</evidence>
<evidence type="ECO:0000303" key="3">
    <source>
    </source>
</evidence>
<evidence type="ECO:0000305" key="4"/>
<keyword id="KW-0489">Methyltransferase</keyword>
<keyword id="KW-1185">Reference proteome</keyword>
<keyword id="KW-0949">S-adenosyl-L-methionine</keyword>
<keyword id="KW-0808">Transferase</keyword>
<accession>Q0CXW9</accession>
<feature type="chain" id="PRO_0000445937" description="Acetylaranotin bis-thiomethyltransferase">
    <location>
        <begin position="1"/>
        <end position="274"/>
    </location>
</feature>